<organism>
    <name type="scientific">Gluconobacter oxydans (strain 621H)</name>
    <name type="common">Gluconobacter suboxydans</name>
    <dbReference type="NCBI Taxonomy" id="290633"/>
    <lineage>
        <taxon>Bacteria</taxon>
        <taxon>Pseudomonadati</taxon>
        <taxon>Pseudomonadota</taxon>
        <taxon>Alphaproteobacteria</taxon>
        <taxon>Acetobacterales</taxon>
        <taxon>Acetobacteraceae</taxon>
        <taxon>Gluconobacter</taxon>
    </lineage>
</organism>
<feature type="chain" id="PRO_0000063385" description="Chaperonin GroEL">
    <location>
        <begin position="1"/>
        <end position="543"/>
    </location>
</feature>
<feature type="binding site" evidence="1">
    <location>
        <begin position="30"/>
        <end position="33"/>
    </location>
    <ligand>
        <name>ATP</name>
        <dbReference type="ChEBI" id="CHEBI:30616"/>
    </ligand>
</feature>
<feature type="binding site" evidence="1">
    <location>
        <position position="51"/>
    </location>
    <ligand>
        <name>ATP</name>
        <dbReference type="ChEBI" id="CHEBI:30616"/>
    </ligand>
</feature>
<feature type="binding site" evidence="1">
    <location>
        <begin position="87"/>
        <end position="91"/>
    </location>
    <ligand>
        <name>ATP</name>
        <dbReference type="ChEBI" id="CHEBI:30616"/>
    </ligand>
</feature>
<feature type="binding site" evidence="1">
    <location>
        <position position="415"/>
    </location>
    <ligand>
        <name>ATP</name>
        <dbReference type="ChEBI" id="CHEBI:30616"/>
    </ligand>
</feature>
<feature type="binding site" evidence="1">
    <location>
        <position position="496"/>
    </location>
    <ligand>
        <name>ATP</name>
        <dbReference type="ChEBI" id="CHEBI:30616"/>
    </ligand>
</feature>
<comment type="function">
    <text evidence="1">Together with its co-chaperonin GroES, plays an essential role in assisting protein folding. The GroEL-GroES system forms a nano-cage that allows encapsulation of the non-native substrate proteins and provides a physical environment optimized to promote and accelerate protein folding.</text>
</comment>
<comment type="catalytic activity">
    <reaction evidence="1">
        <text>ATP + H2O + a folded polypeptide = ADP + phosphate + an unfolded polypeptide.</text>
        <dbReference type="EC" id="5.6.1.7"/>
    </reaction>
</comment>
<comment type="subunit">
    <text evidence="1">Forms a cylinder of 14 subunits composed of two heptameric rings stacked back-to-back. Interacts with the co-chaperonin GroES.</text>
</comment>
<comment type="subcellular location">
    <subcellularLocation>
        <location evidence="1">Cytoplasm</location>
    </subcellularLocation>
</comment>
<comment type="similarity">
    <text evidence="1">Belongs to the chaperonin (HSP60) family.</text>
</comment>
<gene>
    <name evidence="1" type="primary">groEL</name>
    <name evidence="1" type="synonym">groL</name>
    <name type="ordered locus">GOX1902</name>
</gene>
<reference key="1">
    <citation type="journal article" date="2005" name="Nat. Biotechnol.">
        <title>Complete genome sequence of the acetic acid bacterium Gluconobacter oxydans.</title>
        <authorList>
            <person name="Prust C."/>
            <person name="Hoffmeister M."/>
            <person name="Liesegang H."/>
            <person name="Wiezer A."/>
            <person name="Fricke W.F."/>
            <person name="Ehrenreich A."/>
            <person name="Gottschalk G."/>
            <person name="Deppenmeier U."/>
        </authorList>
    </citation>
    <scope>NUCLEOTIDE SEQUENCE [LARGE SCALE GENOMIC DNA]</scope>
    <source>
        <strain>621H</strain>
    </source>
</reference>
<accession>Q5FPQ6</accession>
<name>CH60_GLUOX</name>
<dbReference type="EC" id="5.6.1.7" evidence="1"/>
<dbReference type="EMBL" id="CP000009">
    <property type="protein sequence ID" value="AAW61640.1"/>
    <property type="molecule type" value="Genomic_DNA"/>
</dbReference>
<dbReference type="RefSeq" id="WP_011253420.1">
    <property type="nucleotide sequence ID" value="NC_006677.1"/>
</dbReference>
<dbReference type="SMR" id="Q5FPQ6"/>
<dbReference type="STRING" id="290633.GOX1902"/>
<dbReference type="KEGG" id="gox:GOX1902"/>
<dbReference type="eggNOG" id="COG0459">
    <property type="taxonomic scope" value="Bacteria"/>
</dbReference>
<dbReference type="HOGENOM" id="CLU_016503_3_0_5"/>
<dbReference type="Proteomes" id="UP000006375">
    <property type="component" value="Chromosome"/>
</dbReference>
<dbReference type="GO" id="GO:0005737">
    <property type="term" value="C:cytoplasm"/>
    <property type="evidence" value="ECO:0007669"/>
    <property type="project" value="UniProtKB-SubCell"/>
</dbReference>
<dbReference type="GO" id="GO:0005524">
    <property type="term" value="F:ATP binding"/>
    <property type="evidence" value="ECO:0007669"/>
    <property type="project" value="UniProtKB-UniRule"/>
</dbReference>
<dbReference type="GO" id="GO:0140662">
    <property type="term" value="F:ATP-dependent protein folding chaperone"/>
    <property type="evidence" value="ECO:0007669"/>
    <property type="project" value="InterPro"/>
</dbReference>
<dbReference type="GO" id="GO:0016853">
    <property type="term" value="F:isomerase activity"/>
    <property type="evidence" value="ECO:0007669"/>
    <property type="project" value="UniProtKB-KW"/>
</dbReference>
<dbReference type="GO" id="GO:0051082">
    <property type="term" value="F:unfolded protein binding"/>
    <property type="evidence" value="ECO:0007669"/>
    <property type="project" value="UniProtKB-UniRule"/>
</dbReference>
<dbReference type="GO" id="GO:0042026">
    <property type="term" value="P:protein refolding"/>
    <property type="evidence" value="ECO:0007669"/>
    <property type="project" value="UniProtKB-UniRule"/>
</dbReference>
<dbReference type="CDD" id="cd03344">
    <property type="entry name" value="GroEL"/>
    <property type="match status" value="1"/>
</dbReference>
<dbReference type="FunFam" id="1.10.560.10:FF:000001">
    <property type="entry name" value="60 kDa chaperonin"/>
    <property type="match status" value="1"/>
</dbReference>
<dbReference type="FunFam" id="3.50.7.10:FF:000001">
    <property type="entry name" value="60 kDa chaperonin"/>
    <property type="match status" value="1"/>
</dbReference>
<dbReference type="Gene3D" id="3.50.7.10">
    <property type="entry name" value="GroEL"/>
    <property type="match status" value="1"/>
</dbReference>
<dbReference type="Gene3D" id="1.10.560.10">
    <property type="entry name" value="GroEL-like equatorial domain"/>
    <property type="match status" value="1"/>
</dbReference>
<dbReference type="Gene3D" id="3.30.260.10">
    <property type="entry name" value="TCP-1-like chaperonin intermediate domain"/>
    <property type="match status" value="1"/>
</dbReference>
<dbReference type="HAMAP" id="MF_00600">
    <property type="entry name" value="CH60"/>
    <property type="match status" value="1"/>
</dbReference>
<dbReference type="InterPro" id="IPR018370">
    <property type="entry name" value="Chaperonin_Cpn60_CS"/>
</dbReference>
<dbReference type="InterPro" id="IPR001844">
    <property type="entry name" value="Cpn60/GroEL"/>
</dbReference>
<dbReference type="InterPro" id="IPR002423">
    <property type="entry name" value="Cpn60/GroEL/TCP-1"/>
</dbReference>
<dbReference type="InterPro" id="IPR027409">
    <property type="entry name" value="GroEL-like_apical_dom_sf"/>
</dbReference>
<dbReference type="InterPro" id="IPR027413">
    <property type="entry name" value="GROEL-like_equatorial_sf"/>
</dbReference>
<dbReference type="InterPro" id="IPR027410">
    <property type="entry name" value="TCP-1-like_intermed_sf"/>
</dbReference>
<dbReference type="NCBIfam" id="TIGR02348">
    <property type="entry name" value="GroEL"/>
    <property type="match status" value="1"/>
</dbReference>
<dbReference type="NCBIfam" id="NF000592">
    <property type="entry name" value="PRK00013.1"/>
    <property type="match status" value="1"/>
</dbReference>
<dbReference type="NCBIfam" id="NF009487">
    <property type="entry name" value="PRK12849.1"/>
    <property type="match status" value="1"/>
</dbReference>
<dbReference type="NCBIfam" id="NF009488">
    <property type="entry name" value="PRK12850.1"/>
    <property type="match status" value="1"/>
</dbReference>
<dbReference type="NCBIfam" id="NF009489">
    <property type="entry name" value="PRK12851.1"/>
    <property type="match status" value="1"/>
</dbReference>
<dbReference type="PANTHER" id="PTHR45633">
    <property type="entry name" value="60 KDA HEAT SHOCK PROTEIN, MITOCHONDRIAL"/>
    <property type="match status" value="1"/>
</dbReference>
<dbReference type="Pfam" id="PF00118">
    <property type="entry name" value="Cpn60_TCP1"/>
    <property type="match status" value="1"/>
</dbReference>
<dbReference type="PRINTS" id="PR00298">
    <property type="entry name" value="CHAPERONIN60"/>
</dbReference>
<dbReference type="SUPFAM" id="SSF52029">
    <property type="entry name" value="GroEL apical domain-like"/>
    <property type="match status" value="1"/>
</dbReference>
<dbReference type="SUPFAM" id="SSF48592">
    <property type="entry name" value="GroEL equatorial domain-like"/>
    <property type="match status" value="1"/>
</dbReference>
<dbReference type="SUPFAM" id="SSF54849">
    <property type="entry name" value="GroEL-intermediate domain like"/>
    <property type="match status" value="1"/>
</dbReference>
<dbReference type="PROSITE" id="PS00296">
    <property type="entry name" value="CHAPERONINS_CPN60"/>
    <property type="match status" value="1"/>
</dbReference>
<keyword id="KW-0067">ATP-binding</keyword>
<keyword id="KW-0143">Chaperone</keyword>
<keyword id="KW-0963">Cytoplasm</keyword>
<keyword id="KW-0413">Isomerase</keyword>
<keyword id="KW-0547">Nucleotide-binding</keyword>
<keyword id="KW-1185">Reference proteome</keyword>
<sequence>MAAKDVKFGADARERMLRGVDILANAVKVTLGPKGRNVVLDKSFGAPRITKDGVSVAKEIELADKFENMGAQMVREVASKTNDIAGDGTTTATVLAQAIIREGAKAVAAGMNPMDLKRGIDKAVGVVVDQLKSNTKKITSPEEIAQVGTISANGETEIGEMIASAMQKVGSEGVITVEEAKGLHTELDVVEGMQFDRGYISPYFVTNPEKMTADLDSPYILIHEKKLSSLQPMLPLLESVVQSGRPLVIIAEDVDGEALATLVVNKLRGGLKIAAVKAPGFGDRRKAMLEDIAILTGGQVISEDIGIKLESVTLEMLGRAKKIHIEKENTTIVEGAGNSDDIKGRCNQIRAQIEETTSDYDREKLQERLAKLAGGVAVIRVGGSTEVEVKERKDRVDDALHATRAAVEEGIVPGGGTALARASSALKGLTFDNDDQRVGGEIVRKALQAPLRQIAFNAGEDGAVIAGKVLENEGYVFGFDAQKGEYKDLVAAGIIDPTKVVRTALQDAASVGGLLITTEAMVAERPEKKAPAAAPGGMGDMDF</sequence>
<proteinExistence type="inferred from homology"/>
<evidence type="ECO:0000255" key="1">
    <source>
        <dbReference type="HAMAP-Rule" id="MF_00600"/>
    </source>
</evidence>
<protein>
    <recommendedName>
        <fullName evidence="1">Chaperonin GroEL</fullName>
        <ecNumber evidence="1">5.6.1.7</ecNumber>
    </recommendedName>
    <alternativeName>
        <fullName evidence="1">60 kDa chaperonin</fullName>
    </alternativeName>
    <alternativeName>
        <fullName evidence="1">Chaperonin-60</fullName>
        <shortName evidence="1">Cpn60</shortName>
    </alternativeName>
</protein>